<accession>Q02SG3</accession>
<keyword id="KW-0004">4Fe-4S</keyword>
<keyword id="KW-0963">Cytoplasm</keyword>
<keyword id="KW-0408">Iron</keyword>
<keyword id="KW-0411">Iron-sulfur</keyword>
<keyword id="KW-0479">Metal-binding</keyword>
<keyword id="KW-0949">S-adenosyl-L-methionine</keyword>
<keyword id="KW-0808">Transferase</keyword>
<protein>
    <recommendedName>
        <fullName evidence="1">Lipoyl synthase</fullName>
        <ecNumber evidence="1">2.8.1.8</ecNumber>
    </recommendedName>
    <alternativeName>
        <fullName evidence="1">Lip-syn</fullName>
        <shortName evidence="1">LS</shortName>
    </alternativeName>
    <alternativeName>
        <fullName evidence="1">Lipoate synthase</fullName>
    </alternativeName>
    <alternativeName>
        <fullName evidence="1">Lipoic acid synthase</fullName>
    </alternativeName>
    <alternativeName>
        <fullName evidence="1">Sulfur insertion protein LipA</fullName>
    </alternativeName>
</protein>
<proteinExistence type="inferred from homology"/>
<name>LIPA_PSEAB</name>
<feature type="chain" id="PRO_1000012255" description="Lipoyl synthase">
    <location>
        <begin position="1"/>
        <end position="327"/>
    </location>
</feature>
<feature type="domain" description="Radical SAM core" evidence="2">
    <location>
        <begin position="86"/>
        <end position="303"/>
    </location>
</feature>
<feature type="binding site" evidence="1">
    <location>
        <position position="74"/>
    </location>
    <ligand>
        <name>[4Fe-4S] cluster</name>
        <dbReference type="ChEBI" id="CHEBI:49883"/>
        <label>1</label>
    </ligand>
</feature>
<feature type="binding site" evidence="1">
    <location>
        <position position="79"/>
    </location>
    <ligand>
        <name>[4Fe-4S] cluster</name>
        <dbReference type="ChEBI" id="CHEBI:49883"/>
        <label>1</label>
    </ligand>
</feature>
<feature type="binding site" evidence="1">
    <location>
        <position position="85"/>
    </location>
    <ligand>
        <name>[4Fe-4S] cluster</name>
        <dbReference type="ChEBI" id="CHEBI:49883"/>
        <label>1</label>
    </ligand>
</feature>
<feature type="binding site" evidence="1">
    <location>
        <position position="100"/>
    </location>
    <ligand>
        <name>[4Fe-4S] cluster</name>
        <dbReference type="ChEBI" id="CHEBI:49883"/>
        <label>2</label>
        <note>4Fe-4S-S-AdoMet</note>
    </ligand>
</feature>
<feature type="binding site" evidence="1">
    <location>
        <position position="104"/>
    </location>
    <ligand>
        <name>[4Fe-4S] cluster</name>
        <dbReference type="ChEBI" id="CHEBI:49883"/>
        <label>2</label>
        <note>4Fe-4S-S-AdoMet</note>
    </ligand>
</feature>
<feature type="binding site" evidence="1">
    <location>
        <position position="107"/>
    </location>
    <ligand>
        <name>[4Fe-4S] cluster</name>
        <dbReference type="ChEBI" id="CHEBI:49883"/>
        <label>2</label>
        <note>4Fe-4S-S-AdoMet</note>
    </ligand>
</feature>
<feature type="binding site" evidence="1">
    <location>
        <position position="314"/>
    </location>
    <ligand>
        <name>[4Fe-4S] cluster</name>
        <dbReference type="ChEBI" id="CHEBI:49883"/>
        <label>1</label>
    </ligand>
</feature>
<dbReference type="EC" id="2.8.1.8" evidence="1"/>
<dbReference type="EMBL" id="CP000438">
    <property type="protein sequence ID" value="ABJ13270.1"/>
    <property type="molecule type" value="Genomic_DNA"/>
</dbReference>
<dbReference type="RefSeq" id="WP_003119196.1">
    <property type="nucleotide sequence ID" value="NZ_CP034244.1"/>
</dbReference>
<dbReference type="SMR" id="Q02SG3"/>
<dbReference type="KEGG" id="pau:PA14_12130"/>
<dbReference type="PseudoCAP" id="PA14_12130"/>
<dbReference type="HOGENOM" id="CLU_033144_2_1_6"/>
<dbReference type="BioCyc" id="PAER208963:G1G74-1008-MONOMER"/>
<dbReference type="UniPathway" id="UPA00538">
    <property type="reaction ID" value="UER00593"/>
</dbReference>
<dbReference type="Proteomes" id="UP000000653">
    <property type="component" value="Chromosome"/>
</dbReference>
<dbReference type="GO" id="GO:0005737">
    <property type="term" value="C:cytoplasm"/>
    <property type="evidence" value="ECO:0007669"/>
    <property type="project" value="UniProtKB-SubCell"/>
</dbReference>
<dbReference type="GO" id="GO:0051539">
    <property type="term" value="F:4 iron, 4 sulfur cluster binding"/>
    <property type="evidence" value="ECO:0007669"/>
    <property type="project" value="UniProtKB-UniRule"/>
</dbReference>
<dbReference type="GO" id="GO:0016992">
    <property type="term" value="F:lipoate synthase activity"/>
    <property type="evidence" value="ECO:0007669"/>
    <property type="project" value="UniProtKB-UniRule"/>
</dbReference>
<dbReference type="GO" id="GO:0046872">
    <property type="term" value="F:metal ion binding"/>
    <property type="evidence" value="ECO:0007669"/>
    <property type="project" value="UniProtKB-KW"/>
</dbReference>
<dbReference type="CDD" id="cd01335">
    <property type="entry name" value="Radical_SAM"/>
    <property type="match status" value="1"/>
</dbReference>
<dbReference type="FunFam" id="3.20.20.70:FF:000023">
    <property type="entry name" value="Lipoyl synthase"/>
    <property type="match status" value="1"/>
</dbReference>
<dbReference type="Gene3D" id="3.20.20.70">
    <property type="entry name" value="Aldolase class I"/>
    <property type="match status" value="1"/>
</dbReference>
<dbReference type="HAMAP" id="MF_00206">
    <property type="entry name" value="Lipoyl_synth"/>
    <property type="match status" value="1"/>
</dbReference>
<dbReference type="InterPro" id="IPR013785">
    <property type="entry name" value="Aldolase_TIM"/>
</dbReference>
<dbReference type="InterPro" id="IPR006638">
    <property type="entry name" value="Elp3/MiaA/NifB-like_rSAM"/>
</dbReference>
<dbReference type="InterPro" id="IPR031691">
    <property type="entry name" value="LIAS_N"/>
</dbReference>
<dbReference type="InterPro" id="IPR003698">
    <property type="entry name" value="Lipoyl_synth"/>
</dbReference>
<dbReference type="InterPro" id="IPR007197">
    <property type="entry name" value="rSAM"/>
</dbReference>
<dbReference type="NCBIfam" id="TIGR00510">
    <property type="entry name" value="lipA"/>
    <property type="match status" value="1"/>
</dbReference>
<dbReference type="NCBIfam" id="NF004019">
    <property type="entry name" value="PRK05481.1"/>
    <property type="match status" value="1"/>
</dbReference>
<dbReference type="NCBIfam" id="NF009544">
    <property type="entry name" value="PRK12928.1"/>
    <property type="match status" value="1"/>
</dbReference>
<dbReference type="PANTHER" id="PTHR10949">
    <property type="entry name" value="LIPOYL SYNTHASE"/>
    <property type="match status" value="1"/>
</dbReference>
<dbReference type="PANTHER" id="PTHR10949:SF0">
    <property type="entry name" value="LIPOYL SYNTHASE, MITOCHONDRIAL"/>
    <property type="match status" value="1"/>
</dbReference>
<dbReference type="Pfam" id="PF16881">
    <property type="entry name" value="LIAS_N"/>
    <property type="match status" value="1"/>
</dbReference>
<dbReference type="Pfam" id="PF04055">
    <property type="entry name" value="Radical_SAM"/>
    <property type="match status" value="1"/>
</dbReference>
<dbReference type="PIRSF" id="PIRSF005963">
    <property type="entry name" value="Lipoyl_synth"/>
    <property type="match status" value="1"/>
</dbReference>
<dbReference type="SFLD" id="SFLDF00271">
    <property type="entry name" value="lipoyl_synthase"/>
    <property type="match status" value="1"/>
</dbReference>
<dbReference type="SFLD" id="SFLDG01058">
    <property type="entry name" value="lipoyl_synthase_like"/>
    <property type="match status" value="1"/>
</dbReference>
<dbReference type="SMART" id="SM00729">
    <property type="entry name" value="Elp3"/>
    <property type="match status" value="1"/>
</dbReference>
<dbReference type="SUPFAM" id="SSF102114">
    <property type="entry name" value="Radical SAM enzymes"/>
    <property type="match status" value="1"/>
</dbReference>
<dbReference type="PROSITE" id="PS51918">
    <property type="entry name" value="RADICAL_SAM"/>
    <property type="match status" value="1"/>
</dbReference>
<gene>
    <name evidence="1" type="primary">lipA</name>
    <name type="ordered locus">PA14_12130</name>
</gene>
<reference key="1">
    <citation type="journal article" date="2006" name="Genome Biol.">
        <title>Genomic analysis reveals that Pseudomonas aeruginosa virulence is combinatorial.</title>
        <authorList>
            <person name="Lee D.G."/>
            <person name="Urbach J.M."/>
            <person name="Wu G."/>
            <person name="Liberati N.T."/>
            <person name="Feinbaum R.L."/>
            <person name="Miyata S."/>
            <person name="Diggins L.T."/>
            <person name="He J."/>
            <person name="Saucier M."/>
            <person name="Deziel E."/>
            <person name="Friedman L."/>
            <person name="Li L."/>
            <person name="Grills G."/>
            <person name="Montgomery K."/>
            <person name="Kucherlapati R."/>
            <person name="Rahme L.G."/>
            <person name="Ausubel F.M."/>
        </authorList>
    </citation>
    <scope>NUCLEOTIDE SEQUENCE [LARGE SCALE GENOMIC DNA]</scope>
    <source>
        <strain>UCBPP-PA14</strain>
    </source>
</reference>
<organism>
    <name type="scientific">Pseudomonas aeruginosa (strain UCBPP-PA14)</name>
    <dbReference type="NCBI Taxonomy" id="208963"/>
    <lineage>
        <taxon>Bacteria</taxon>
        <taxon>Pseudomonadati</taxon>
        <taxon>Pseudomonadota</taxon>
        <taxon>Gammaproteobacteria</taxon>
        <taxon>Pseudomonadales</taxon>
        <taxon>Pseudomonadaceae</taxon>
        <taxon>Pseudomonas</taxon>
    </lineage>
</organism>
<comment type="function">
    <text evidence="1">Catalyzes the radical-mediated insertion of two sulfur atoms into the C-6 and C-8 positions of the octanoyl moiety bound to the lipoyl domains of lipoate-dependent enzymes, thereby converting the octanoylated domains into lipoylated derivatives.</text>
</comment>
<comment type="catalytic activity">
    <reaction evidence="1">
        <text>[[Fe-S] cluster scaffold protein carrying a second [4Fe-4S](2+) cluster] + N(6)-octanoyl-L-lysyl-[protein] + 2 oxidized [2Fe-2S]-[ferredoxin] + 2 S-adenosyl-L-methionine + 4 H(+) = [[Fe-S] cluster scaffold protein] + N(6)-[(R)-dihydrolipoyl]-L-lysyl-[protein] + 4 Fe(3+) + 2 hydrogen sulfide + 2 5'-deoxyadenosine + 2 L-methionine + 2 reduced [2Fe-2S]-[ferredoxin]</text>
        <dbReference type="Rhea" id="RHEA:16585"/>
        <dbReference type="Rhea" id="RHEA-COMP:9928"/>
        <dbReference type="Rhea" id="RHEA-COMP:10000"/>
        <dbReference type="Rhea" id="RHEA-COMP:10001"/>
        <dbReference type="Rhea" id="RHEA-COMP:10475"/>
        <dbReference type="Rhea" id="RHEA-COMP:14568"/>
        <dbReference type="Rhea" id="RHEA-COMP:14569"/>
        <dbReference type="ChEBI" id="CHEBI:15378"/>
        <dbReference type="ChEBI" id="CHEBI:17319"/>
        <dbReference type="ChEBI" id="CHEBI:29034"/>
        <dbReference type="ChEBI" id="CHEBI:29919"/>
        <dbReference type="ChEBI" id="CHEBI:33722"/>
        <dbReference type="ChEBI" id="CHEBI:33737"/>
        <dbReference type="ChEBI" id="CHEBI:33738"/>
        <dbReference type="ChEBI" id="CHEBI:57844"/>
        <dbReference type="ChEBI" id="CHEBI:59789"/>
        <dbReference type="ChEBI" id="CHEBI:78809"/>
        <dbReference type="ChEBI" id="CHEBI:83100"/>
        <dbReference type="EC" id="2.8.1.8"/>
    </reaction>
</comment>
<comment type="cofactor">
    <cofactor evidence="1">
        <name>[4Fe-4S] cluster</name>
        <dbReference type="ChEBI" id="CHEBI:49883"/>
    </cofactor>
    <text evidence="1">Binds 2 [4Fe-4S] clusters per subunit. One cluster is coordinated with 3 cysteines and an exchangeable S-adenosyl-L-methionine.</text>
</comment>
<comment type="pathway">
    <text evidence="1">Protein modification; protein lipoylation via endogenous pathway; protein N(6)-(lipoyl)lysine from octanoyl-[acyl-carrier-protein]: step 2/2.</text>
</comment>
<comment type="subcellular location">
    <subcellularLocation>
        <location evidence="1">Cytoplasm</location>
    </subcellularLocation>
</comment>
<comment type="similarity">
    <text evidence="1">Belongs to the radical SAM superfamily. Lipoyl synthase family.</text>
</comment>
<evidence type="ECO:0000255" key="1">
    <source>
        <dbReference type="HAMAP-Rule" id="MF_00206"/>
    </source>
</evidence>
<evidence type="ECO:0000255" key="2">
    <source>
        <dbReference type="PROSITE-ProRule" id="PRU01266"/>
    </source>
</evidence>
<sequence>MSTVVEKSGEAKPGKVEVGVKLRGAEKVARIPVKIIPTEELPKKPDWIRVRIPVSPEVDRIKQLLRKHKLHSVCEEASCPNLGECFSGGTATFMIMGDICTRRCPFCDVGHGRPKPLDVDEPTNLAIAIADLRLKYVVITSVDRDDLRDGGAQHFADCLREIRKLSPGIQLETLVPDYRGRMDIALEITANEPPDVFNHNLETVPRLYRSSRPGSDFEWSLDLLQKFKQMVPHVPTKSGLMLGLGETDDEVIEVMQRMREHDIDMLTLGQYLQPSRNHLPVQRFVHPDTFAWFAEEGEKMGFKNVASGPLVRSSYHADQQAHGNKIG</sequence>